<sequence length="290" mass="33008">MTDEFGMVEPQEGEAFGDEWEEIDVSDDEADRIARRKDRDFDEFRMRLKDADQFKVEQSVFDDATFAAIYKLVQDGHIDAFGGPISTGKEANVFEALGGDDADVAVKIYRINASDFRHMRDYLEGDPRFENIGHDKGQVVRAWVRKEFANLERAQRAGVRVPKPIAVQRNVLVMELVGVVDDRARRLSEVRVENPQTAYEVVREYMRRLHRAGLVHGDLSEYNLIIHDGELVVIDLGQAVTVHHPNAEEFLRRDCRNVANFFRRQGADADGDSLYEFVTGDEGEDGDGDE</sequence>
<protein>
    <recommendedName>
        <fullName>RIO-type serine/threonine-protein kinase Rio1</fullName>
        <ecNumber>2.7.11.1</ecNumber>
        <ecNumber evidence="1">3.6.1.-</ecNumber>
    </recommendedName>
</protein>
<organism>
    <name type="scientific">Haloferax volcanii (strain ATCC 29605 / DSM 3757 / JCM 8879 / NBRC 14742 / NCIMB 2012 / VKM B-1768 / DS2)</name>
    <name type="common">Halobacterium volcanii</name>
    <dbReference type="NCBI Taxonomy" id="309800"/>
    <lineage>
        <taxon>Archaea</taxon>
        <taxon>Methanobacteriati</taxon>
        <taxon>Methanobacteriota</taxon>
        <taxon>Stenosarchaea group</taxon>
        <taxon>Halobacteria</taxon>
        <taxon>Halobacteriales</taxon>
        <taxon>Haloferacaceae</taxon>
        <taxon>Haloferax</taxon>
    </lineage>
</organism>
<comment type="function">
    <text evidence="1 5">Serine/threonine-protein kinase that is able to autophosphorylate as well as to phosphorylate proteasome subunit alpha 1 (PsmA1) in vitro (PubMed:20671954). Despite the protein kinase domain is proposed to act predominantly as an ATPase (By similarity).</text>
</comment>
<comment type="catalytic activity">
    <reaction evidence="5">
        <text>L-seryl-[protein] + ATP = O-phospho-L-seryl-[protein] + ADP + H(+)</text>
        <dbReference type="Rhea" id="RHEA:17989"/>
        <dbReference type="Rhea" id="RHEA-COMP:9863"/>
        <dbReference type="Rhea" id="RHEA-COMP:11604"/>
        <dbReference type="ChEBI" id="CHEBI:15378"/>
        <dbReference type="ChEBI" id="CHEBI:29999"/>
        <dbReference type="ChEBI" id="CHEBI:30616"/>
        <dbReference type="ChEBI" id="CHEBI:83421"/>
        <dbReference type="ChEBI" id="CHEBI:456216"/>
        <dbReference type="EC" id="2.7.11.1"/>
    </reaction>
</comment>
<comment type="catalytic activity">
    <reaction evidence="5">
        <text>L-threonyl-[protein] + ATP = O-phospho-L-threonyl-[protein] + ADP + H(+)</text>
        <dbReference type="Rhea" id="RHEA:46608"/>
        <dbReference type="Rhea" id="RHEA-COMP:11060"/>
        <dbReference type="Rhea" id="RHEA-COMP:11605"/>
        <dbReference type="ChEBI" id="CHEBI:15378"/>
        <dbReference type="ChEBI" id="CHEBI:30013"/>
        <dbReference type="ChEBI" id="CHEBI:30616"/>
        <dbReference type="ChEBI" id="CHEBI:61977"/>
        <dbReference type="ChEBI" id="CHEBI:456216"/>
        <dbReference type="EC" id="2.7.11.1"/>
    </reaction>
</comment>
<comment type="catalytic activity">
    <reaction evidence="1">
        <text>ATP + H2O = ADP + phosphate + H(+)</text>
        <dbReference type="Rhea" id="RHEA:13065"/>
        <dbReference type="ChEBI" id="CHEBI:15377"/>
        <dbReference type="ChEBI" id="CHEBI:15378"/>
        <dbReference type="ChEBI" id="CHEBI:30616"/>
        <dbReference type="ChEBI" id="CHEBI:43474"/>
        <dbReference type="ChEBI" id="CHEBI:456216"/>
    </reaction>
</comment>
<comment type="cofactor">
    <cofactor evidence="5">
        <name>Mg(2+)</name>
        <dbReference type="ChEBI" id="CHEBI:18420"/>
    </cofactor>
    <cofactor evidence="5">
        <name>Mn(2+)</name>
        <dbReference type="ChEBI" id="CHEBI:29035"/>
    </cofactor>
</comment>
<comment type="PTM">
    <text>Autophosphorylated.</text>
</comment>
<comment type="similarity">
    <text evidence="6">Belongs to the protein kinase superfamily. RIO-type Ser/Thr kinase family.</text>
</comment>
<accession>D4GYY1</accession>
<dbReference type="EC" id="2.7.11.1"/>
<dbReference type="EC" id="3.6.1.-" evidence="1"/>
<dbReference type="EMBL" id="CP001956">
    <property type="protein sequence ID" value="ADE02358.1"/>
    <property type="molecule type" value="Genomic_DNA"/>
</dbReference>
<dbReference type="EMBL" id="AOHU01000105">
    <property type="protein sequence ID" value="ELY24349.1"/>
    <property type="molecule type" value="Genomic_DNA"/>
</dbReference>
<dbReference type="RefSeq" id="WP_004045247.1">
    <property type="nucleotide sequence ID" value="NC_013967.1"/>
</dbReference>
<dbReference type="SMR" id="D4GYY1"/>
<dbReference type="STRING" id="309800.HVO_0135"/>
<dbReference type="PaxDb" id="309800-C498_18913"/>
<dbReference type="EnsemblBacteria" id="ADE02358">
    <property type="protein sequence ID" value="ADE02358"/>
    <property type="gene ID" value="HVO_0135"/>
</dbReference>
<dbReference type="GeneID" id="8925605"/>
<dbReference type="KEGG" id="hvo:HVO_0135"/>
<dbReference type="PATRIC" id="fig|309800.29.peg.3685"/>
<dbReference type="eggNOG" id="arCOG01180">
    <property type="taxonomic scope" value="Archaea"/>
</dbReference>
<dbReference type="HOGENOM" id="CLU_018693_3_3_2"/>
<dbReference type="OrthoDB" id="31344at2157"/>
<dbReference type="Proteomes" id="UP000008243">
    <property type="component" value="Chromosome"/>
</dbReference>
<dbReference type="Proteomes" id="UP000011532">
    <property type="component" value="Unassembled WGS sequence"/>
</dbReference>
<dbReference type="GO" id="GO:0005524">
    <property type="term" value="F:ATP binding"/>
    <property type="evidence" value="ECO:0007669"/>
    <property type="project" value="UniProtKB-KW"/>
</dbReference>
<dbReference type="GO" id="GO:0016787">
    <property type="term" value="F:hydrolase activity"/>
    <property type="evidence" value="ECO:0007669"/>
    <property type="project" value="UniProtKB-KW"/>
</dbReference>
<dbReference type="GO" id="GO:0046872">
    <property type="term" value="F:metal ion binding"/>
    <property type="evidence" value="ECO:0007669"/>
    <property type="project" value="UniProtKB-KW"/>
</dbReference>
<dbReference type="GO" id="GO:0106310">
    <property type="term" value="F:protein serine kinase activity"/>
    <property type="evidence" value="ECO:0007669"/>
    <property type="project" value="RHEA"/>
</dbReference>
<dbReference type="GO" id="GO:0004674">
    <property type="term" value="F:protein serine/threonine kinase activity"/>
    <property type="evidence" value="ECO:0007669"/>
    <property type="project" value="UniProtKB-KW"/>
</dbReference>
<dbReference type="CDD" id="cd05145">
    <property type="entry name" value="RIO1_like"/>
    <property type="match status" value="1"/>
</dbReference>
<dbReference type="Gene3D" id="3.30.200.20">
    <property type="entry name" value="Phosphorylase Kinase, domain 1"/>
    <property type="match status" value="1"/>
</dbReference>
<dbReference type="Gene3D" id="1.10.510.10">
    <property type="entry name" value="Transferase(Phosphotransferase) domain 1"/>
    <property type="match status" value="1"/>
</dbReference>
<dbReference type="InterPro" id="IPR011009">
    <property type="entry name" value="Kinase-like_dom_sf"/>
</dbReference>
<dbReference type="InterPro" id="IPR000719">
    <property type="entry name" value="Prot_kinase_dom"/>
</dbReference>
<dbReference type="InterPro" id="IPR051272">
    <property type="entry name" value="RIO-type_Ser/Thr_kinase"/>
</dbReference>
<dbReference type="InterPro" id="IPR054876">
    <property type="entry name" value="RIO1_kinase"/>
</dbReference>
<dbReference type="InterPro" id="IPR018934">
    <property type="entry name" value="RIO_dom"/>
</dbReference>
<dbReference type="InterPro" id="IPR000687">
    <property type="entry name" value="RIO_kinase"/>
</dbReference>
<dbReference type="InterPro" id="IPR018935">
    <property type="entry name" value="RIO_kinase_CS"/>
</dbReference>
<dbReference type="InterPro" id="IPR008266">
    <property type="entry name" value="Tyr_kinase_AS"/>
</dbReference>
<dbReference type="NCBIfam" id="NF041310">
    <property type="entry name" value="Prot_Kin_Rio1_Halo"/>
    <property type="match status" value="1"/>
</dbReference>
<dbReference type="PANTHER" id="PTHR45723">
    <property type="entry name" value="SERINE/THREONINE-PROTEIN KINASE RIO1"/>
    <property type="match status" value="1"/>
</dbReference>
<dbReference type="Pfam" id="PF01163">
    <property type="entry name" value="RIO1"/>
    <property type="match status" value="1"/>
</dbReference>
<dbReference type="SMART" id="SM00090">
    <property type="entry name" value="RIO"/>
    <property type="match status" value="1"/>
</dbReference>
<dbReference type="SUPFAM" id="SSF56112">
    <property type="entry name" value="Protein kinase-like (PK-like)"/>
    <property type="match status" value="1"/>
</dbReference>
<dbReference type="PROSITE" id="PS50011">
    <property type="entry name" value="PROTEIN_KINASE_DOM"/>
    <property type="match status" value="1"/>
</dbReference>
<dbReference type="PROSITE" id="PS01245">
    <property type="entry name" value="RIO1"/>
    <property type="match status" value="1"/>
</dbReference>
<gene>
    <name type="primary">rio1</name>
    <name type="ordered locus">HVO_0135</name>
    <name type="ORF">C498_18913</name>
</gene>
<feature type="chain" id="PRO_0000428911" description="RIO-type serine/threonine-protein kinase Rio1">
    <location>
        <begin position="1"/>
        <end position="290"/>
    </location>
</feature>
<feature type="domain" description="Protein kinase" evidence="3">
    <location>
        <begin position="79"/>
        <end position="290"/>
    </location>
</feature>
<feature type="region of interest" description="Disordered" evidence="4">
    <location>
        <begin position="1"/>
        <end position="22"/>
    </location>
</feature>
<feature type="compositionally biased region" description="Acidic residues" evidence="4">
    <location>
        <begin position="11"/>
        <end position="22"/>
    </location>
</feature>
<feature type="active site" description="Proton acceptor" evidence="2 3">
    <location>
        <position position="218"/>
    </location>
</feature>
<feature type="active site" description="4-aspartylphosphate intermediate" evidence="2">
    <location>
        <position position="235"/>
    </location>
</feature>
<feature type="binding site" evidence="3">
    <location>
        <begin position="85"/>
        <end position="93"/>
    </location>
    <ligand>
        <name>ATP</name>
        <dbReference type="ChEBI" id="CHEBI:30616"/>
    </ligand>
</feature>
<feature type="binding site" evidence="3">
    <location>
        <position position="107"/>
    </location>
    <ligand>
        <name>ATP</name>
        <dbReference type="ChEBI" id="CHEBI:30616"/>
    </ligand>
</feature>
<feature type="binding site" evidence="3">
    <location>
        <position position="175"/>
    </location>
    <ligand>
        <name>ATP</name>
        <dbReference type="ChEBI" id="CHEBI:30616"/>
    </ligand>
</feature>
<feature type="binding site" evidence="3">
    <location>
        <position position="177"/>
    </location>
    <ligand>
        <name>ATP</name>
        <dbReference type="ChEBI" id="CHEBI:30616"/>
    </ligand>
</feature>
<feature type="binding site" evidence="2">
    <location>
        <position position="223"/>
    </location>
    <ligand>
        <name>Mg(2+)</name>
        <dbReference type="ChEBI" id="CHEBI:18420"/>
    </ligand>
</feature>
<feature type="binding site" evidence="2">
    <location>
        <position position="235"/>
    </location>
    <ligand>
        <name>Mg(2+)</name>
        <dbReference type="ChEBI" id="CHEBI:18420"/>
    </ligand>
</feature>
<keyword id="KW-0067">ATP-binding</keyword>
<keyword id="KW-0378">Hydrolase</keyword>
<keyword id="KW-0418">Kinase</keyword>
<keyword id="KW-0460">Magnesium</keyword>
<keyword id="KW-0464">Manganese</keyword>
<keyword id="KW-0479">Metal-binding</keyword>
<keyword id="KW-0547">Nucleotide-binding</keyword>
<keyword id="KW-0597">Phosphoprotein</keyword>
<keyword id="KW-1185">Reference proteome</keyword>
<keyword id="KW-0723">Serine/threonine-protein kinase</keyword>
<keyword id="KW-0808">Transferase</keyword>
<proteinExistence type="evidence at protein level"/>
<reference key="1">
    <citation type="journal article" date="2010" name="PLoS ONE">
        <title>The complete genome sequence of Haloferax volcanii DS2, a model archaeon.</title>
        <authorList>
            <person name="Hartman A.L."/>
            <person name="Norais C."/>
            <person name="Badger J.H."/>
            <person name="Delmas S."/>
            <person name="Haldenby S."/>
            <person name="Madupu R."/>
            <person name="Robinson J."/>
            <person name="Khouri H."/>
            <person name="Ren Q."/>
            <person name="Lowe T.M."/>
            <person name="Maupin-Furlow J."/>
            <person name="Pohlschroder M."/>
            <person name="Daniels C."/>
            <person name="Pfeiffer F."/>
            <person name="Allers T."/>
            <person name="Eisen J.A."/>
        </authorList>
    </citation>
    <scope>NUCLEOTIDE SEQUENCE [LARGE SCALE GENOMIC DNA]</scope>
    <source>
        <strain>ATCC 29605 / DSM 3757 / JCM 8879 / NBRC 14742 / NCIMB 2012 / VKM B-1768 / DS2</strain>
    </source>
</reference>
<reference key="2">
    <citation type="journal article" date="2014" name="PLoS Genet.">
        <title>Phylogenetically driven sequencing of extremely halophilic archaea reveals strategies for static and dynamic osmo-response.</title>
        <authorList>
            <person name="Becker E.A."/>
            <person name="Seitzer P.M."/>
            <person name="Tritt A."/>
            <person name="Larsen D."/>
            <person name="Krusor M."/>
            <person name="Yao A.I."/>
            <person name="Wu D."/>
            <person name="Madern D."/>
            <person name="Eisen J.A."/>
            <person name="Darling A.E."/>
            <person name="Facciotti M.T."/>
        </authorList>
    </citation>
    <scope>NUCLEOTIDE SEQUENCE [LARGE SCALE GENOMIC DNA]</scope>
    <source>
        <strain>ATCC 29605 / DSM 3757 / JCM 8879 / NBRC 14742 / NCIMB 2012 / VKM B-1768 / DS2</strain>
    </source>
</reference>
<reference key="3">
    <citation type="journal article" date="2010" name="Archaea">
        <title>Phosphorylation and methylation of proteasomal proteins of the haloarcheon Haloferax volcanii.</title>
        <authorList>
            <person name="Humbard M.A."/>
            <person name="Reuter C.J."/>
            <person name="Zuobi-Hasona K."/>
            <person name="Zhou G."/>
            <person name="Maupin-Furlow J.A."/>
        </authorList>
    </citation>
    <scope>FUNCTION</scope>
    <scope>CATALYTIC ACTIVITY</scope>
    <scope>COFACTOR</scope>
    <scope>AUTOPHOSPHORYLATION</scope>
</reference>
<name>RIO1_HALVD</name>
<evidence type="ECO:0000250" key="1">
    <source>
        <dbReference type="UniProtKB" id="G0S3J5"/>
    </source>
</evidence>
<evidence type="ECO:0000250" key="2">
    <source>
        <dbReference type="UniProtKB" id="Q9BRS2"/>
    </source>
</evidence>
<evidence type="ECO:0000255" key="3">
    <source>
        <dbReference type="PROSITE-ProRule" id="PRU00159"/>
    </source>
</evidence>
<evidence type="ECO:0000256" key="4">
    <source>
        <dbReference type="SAM" id="MobiDB-lite"/>
    </source>
</evidence>
<evidence type="ECO:0000269" key="5">
    <source>
    </source>
</evidence>
<evidence type="ECO:0000305" key="6"/>